<feature type="chain" id="PRO_0000145479" description="Dermatopontin">
    <location>
        <begin position="1"/>
        <end position="183"/>
    </location>
</feature>
<feature type="repeat" description="1-1">
    <location>
        <begin position="8"/>
        <end position="61"/>
    </location>
</feature>
<feature type="repeat" description="2-1">
    <location>
        <begin position="52"/>
        <end position="57"/>
    </location>
</feature>
<feature type="repeat" description="1-2">
    <location>
        <begin position="62"/>
        <end position="117"/>
    </location>
</feature>
<feature type="repeat" description="2-2">
    <location>
        <begin position="107"/>
        <end position="112"/>
    </location>
</feature>
<feature type="repeat" description="2-3">
    <location>
        <begin position="163"/>
        <end position="168"/>
    </location>
</feature>
<feature type="region of interest" description="2 X 53-55 AA tandem repeats">
    <location>
        <begin position="8"/>
        <end position="117"/>
    </location>
</feature>
<feature type="region of interest" description="3 X 6 AA tandem repeats of D-R-[EQ]-W-[NQK]-[FY]">
    <location>
        <begin position="52"/>
        <end position="168"/>
    </location>
</feature>
<feature type="modified residue" description="Pyrrolidone carboxylic acid" evidence="2">
    <location>
        <position position="1"/>
    </location>
</feature>
<feature type="modified residue" description="Sulfotyrosine" evidence="3">
    <location>
        <position position="5"/>
    </location>
</feature>
<feature type="modified residue" description="Sulfotyrosine" evidence="3">
    <location>
        <position position="144"/>
    </location>
</feature>
<feature type="modified residue" description="Sulfotyrosine" evidence="3">
    <location>
        <position position="146"/>
    </location>
</feature>
<feature type="modified residue" description="Sulfotyrosine" evidence="3">
    <location>
        <position position="148"/>
    </location>
</feature>
<feature type="modified residue" description="Sulfotyrosine" evidence="3">
    <location>
        <position position="149"/>
    </location>
</feature>
<feature type="modified residue" description="Sulfotyrosine" evidence="3">
    <location>
        <position position="176"/>
    </location>
</feature>
<feature type="disulfide bond" evidence="1">
    <location>
        <begin position="32"/>
        <end position="59"/>
    </location>
</feature>
<feature type="disulfide bond" description="Or C-90 with C-133" evidence="1">
    <location>
        <begin position="72"/>
        <end position="114"/>
    </location>
</feature>
<feature type="disulfide bond" description="Or C-106 with C-132" evidence="1">
    <location>
        <begin position="88"/>
        <end position="115"/>
    </location>
</feature>
<feature type="disulfide bond" evidence="1">
    <location>
        <begin position="121"/>
        <end position="178"/>
    </location>
</feature>
<feature type="disulfide bond" evidence="1">
    <location>
        <begin position="125"/>
        <end position="171"/>
    </location>
</feature>
<reference key="1">
    <citation type="thesis" date="1993" institute="University of Edinburgh" country="United Kingdom">
        <title>Amino acid sequence studies of lysyl oxidase and TRAMP (Tyrosine rich acidic matrix protein).</title>
        <authorList>
            <person name="Cronshaw A.D."/>
        </authorList>
    </citation>
    <scope>PROTEIN SEQUENCE</scope>
</reference>
<reference key="2">
    <citation type="journal article" date="1993" name="Matrix">
        <title>TRAMP (tyrosine rich acidic matrix protein), a protein that co-purifies with lysyl oxidase from porcine skin. Identification of TRAMP as the dermatan sulphate proteoglycan-associated 22K extracellular matrix protein.</title>
        <authorList>
            <person name="Cronshaw A.D."/>
            <person name="Macbeath J.R.E."/>
            <person name="Shackleton D.R."/>
            <person name="Collins J.F."/>
            <person name="Fothergill-Gilmore L.A."/>
            <person name="Hulmes D.J.S."/>
        </authorList>
    </citation>
    <scope>PROTEIN SEQUENCE OF 83-126</scope>
    <scope>MASS SPECTROMETRY</scope>
    <scope>SULFATION</scope>
    <scope>POLYMORPHISM</scope>
    <source>
        <tissue>Skin</tissue>
    </source>
</reference>
<reference key="3">
    <citation type="journal article" date="1993" name="J. Biol. Chem.">
        <title>Tyrosine-rich acidic matrix protein (TRAMP) accelerates collagen fibril formation in vitro.</title>
        <authorList>
            <person name="MacBeath J.R.E."/>
            <person name="Shackleton D.R."/>
            <person name="Hulmes D.J.S."/>
        </authorList>
    </citation>
    <scope>FUNCTION</scope>
</reference>
<reference key="4">
    <citation type="journal article" date="1994" name="FEBS Lett.">
        <title>Tyrosine-rich acidic matrix protein (TRAMP) is a tyrosine-sulphated and widely distributed protein of the extracellular matrix.</title>
        <authorList>
            <person name="Forbes E.G."/>
            <person name="Cronshaw A.D."/>
            <person name="MacBeath J.R.E."/>
            <person name="Hulmes D.J.S."/>
        </authorList>
    </citation>
    <scope>SUBCELLULAR LOCATION</scope>
    <scope>TISSUE SPECIFICITY</scope>
    <scope>SULFATION</scope>
</reference>
<sequence>QYGDYGYPYQQYHDYSDDGWVNLNRQGFSYQCPHGQVVVAVRSIFNKKEGSDRQWNYACMPTPQSLGEPSECWWEEINRAGMEWYQTCSNNGLVAGFQSRYFESVLDREWQFYCCRYSKRCPYSCWMTTEYPGHYGEEMDMISYNYDYYMRGATTTFSAVERDRQWKFIMCRMTDYDCEFANV</sequence>
<accession>P45846</accession>
<evidence type="ECO:0000250" key="1"/>
<evidence type="ECO:0000250" key="2">
    <source>
        <dbReference type="UniProtKB" id="P19427"/>
    </source>
</evidence>
<evidence type="ECO:0000255" key="3"/>
<evidence type="ECO:0000269" key="4">
    <source>
    </source>
</evidence>
<evidence type="ECO:0000269" key="5">
    <source>
    </source>
</evidence>
<evidence type="ECO:0000269" key="6">
    <source>
    </source>
</evidence>
<evidence type="ECO:0000305" key="7"/>
<dbReference type="PIR" id="S34838">
    <property type="entry name" value="S34838"/>
</dbReference>
<dbReference type="FunCoup" id="P45846">
    <property type="interactions" value="9"/>
</dbReference>
<dbReference type="STRING" id="9823.ENSSSCP00000035407"/>
<dbReference type="PaxDb" id="9823-ENSSSCP00000006714"/>
<dbReference type="PeptideAtlas" id="P45846"/>
<dbReference type="eggNOG" id="ENOG502RTKC">
    <property type="taxonomic scope" value="Eukaryota"/>
</dbReference>
<dbReference type="HOGENOM" id="CLU_122082_1_0_1"/>
<dbReference type="InParanoid" id="P45846"/>
<dbReference type="Proteomes" id="UP000008227">
    <property type="component" value="Unplaced"/>
</dbReference>
<dbReference type="Proteomes" id="UP000314985">
    <property type="component" value="Unplaced"/>
</dbReference>
<dbReference type="Proteomes" id="UP000694570">
    <property type="component" value="Unplaced"/>
</dbReference>
<dbReference type="Proteomes" id="UP000694571">
    <property type="component" value="Unplaced"/>
</dbReference>
<dbReference type="Proteomes" id="UP000694720">
    <property type="component" value="Unplaced"/>
</dbReference>
<dbReference type="Proteomes" id="UP000694722">
    <property type="component" value="Unplaced"/>
</dbReference>
<dbReference type="Proteomes" id="UP000694723">
    <property type="component" value="Unplaced"/>
</dbReference>
<dbReference type="Proteomes" id="UP000694724">
    <property type="component" value="Unplaced"/>
</dbReference>
<dbReference type="Proteomes" id="UP000694725">
    <property type="component" value="Unplaced"/>
</dbReference>
<dbReference type="Proteomes" id="UP000694726">
    <property type="component" value="Unplaced"/>
</dbReference>
<dbReference type="Proteomes" id="UP000694727">
    <property type="component" value="Unplaced"/>
</dbReference>
<dbReference type="Proteomes" id="UP000694728">
    <property type="component" value="Unplaced"/>
</dbReference>
<dbReference type="GO" id="GO:0005576">
    <property type="term" value="C:extracellular region"/>
    <property type="evidence" value="ECO:0007669"/>
    <property type="project" value="UniProtKB-KW"/>
</dbReference>
<dbReference type="GO" id="GO:0007155">
    <property type="term" value="P:cell adhesion"/>
    <property type="evidence" value="ECO:0007669"/>
    <property type="project" value="UniProtKB-KW"/>
</dbReference>
<dbReference type="GO" id="GO:0030199">
    <property type="term" value="P:collagen fibril organization"/>
    <property type="evidence" value="ECO:0000318"/>
    <property type="project" value="GO_Central"/>
</dbReference>
<dbReference type="InterPro" id="IPR026645">
    <property type="entry name" value="Dermatopontin"/>
</dbReference>
<dbReference type="PANTHER" id="PTHR15040:SF2">
    <property type="entry name" value="DERMATOPONTIN"/>
    <property type="match status" value="1"/>
</dbReference>
<dbReference type="PANTHER" id="PTHR15040">
    <property type="entry name" value="DERMATOPONTIN-RELATED"/>
    <property type="match status" value="1"/>
</dbReference>
<dbReference type="Pfam" id="PF14704">
    <property type="entry name" value="DERM"/>
    <property type="match status" value="1"/>
</dbReference>
<organism>
    <name type="scientific">Sus scrofa</name>
    <name type="common">Pig</name>
    <dbReference type="NCBI Taxonomy" id="9823"/>
    <lineage>
        <taxon>Eukaryota</taxon>
        <taxon>Metazoa</taxon>
        <taxon>Chordata</taxon>
        <taxon>Craniata</taxon>
        <taxon>Vertebrata</taxon>
        <taxon>Euteleostomi</taxon>
        <taxon>Mammalia</taxon>
        <taxon>Eutheria</taxon>
        <taxon>Laurasiatheria</taxon>
        <taxon>Artiodactyla</taxon>
        <taxon>Suina</taxon>
        <taxon>Suidae</taxon>
        <taxon>Sus</taxon>
    </lineage>
</organism>
<name>DERM_PIG</name>
<comment type="function">
    <text evidence="1 6">Seems to mediate adhesion by cell surface integrin binding. May serve as a communication link between the dermal fibroblast cell surface and its extracellular matrix environment. Enhances TGFB1 activity. Inhibits cell proliferation (By similarity). Accelerates collagen fibril formation, and stabilizes collagen fibrils against low-temperature dissociation.</text>
</comment>
<comment type="subunit">
    <text evidence="1">Interacts with TGFB1, DCN and collagen.</text>
</comment>
<comment type="subcellular location">
    <subcellularLocation>
        <location evidence="4">Secreted</location>
        <location evidence="4">Extracellular space</location>
        <location evidence="4">Extracellular matrix</location>
    </subcellularLocation>
</comment>
<comment type="tissue specificity">
    <text evidence="4">Detected in skin, skeletal muscle, heart, lung, articular cartilage, long bone and calvaria. Smaller amounts detected in kidney. Not detected in brain, liver or spleen.</text>
</comment>
<comment type="PTM">
    <text evidence="4 5">Sulfated on tyrosine residue(s).</text>
</comment>
<comment type="mass spectrometry">
    <text>Allele T1.</text>
</comment>
<comment type="mass spectrometry">
    <text>Allele T2.</text>
</comment>
<comment type="mass spectrometry">
    <text>Allele T3.</text>
</comment>
<comment type="mass spectrometry">
    <text>Allele T4.</text>
</comment>
<comment type="mass spectrometry">
    <text>Allele T5.</text>
</comment>
<comment type="polymorphism">
    <text evidence="5">Five alleles occur, which differ in mass and pI (T1, T2, T3, T4 and T5).</text>
</comment>
<comment type="similarity">
    <text evidence="7">Belongs to the dermatopontin family.</text>
</comment>
<protein>
    <recommendedName>
        <fullName>Dermatopontin</fullName>
    </recommendedName>
    <alternativeName>
        <fullName>22 kDa extracellular matrix protein</fullName>
    </alternativeName>
    <alternativeName>
        <fullName>Dermatan sulfate proteoglycan-associated protein 22K</fullName>
    </alternativeName>
    <alternativeName>
        <fullName>Tyrosine-rich acidic matrix protein</fullName>
        <shortName>TRAMP</shortName>
    </alternativeName>
</protein>
<gene>
    <name type="primary">DPT</name>
</gene>
<keyword id="KW-0130">Cell adhesion</keyword>
<keyword id="KW-0903">Direct protein sequencing</keyword>
<keyword id="KW-1015">Disulfide bond</keyword>
<keyword id="KW-0272">Extracellular matrix</keyword>
<keyword id="KW-0873">Pyrrolidone carboxylic acid</keyword>
<keyword id="KW-1185">Reference proteome</keyword>
<keyword id="KW-0677">Repeat</keyword>
<keyword id="KW-0964">Secreted</keyword>
<keyword id="KW-0765">Sulfation</keyword>
<proteinExistence type="evidence at protein level"/>